<keyword id="KW-1185">Reference proteome</keyword>
<keyword id="KW-0687">Ribonucleoprotein</keyword>
<keyword id="KW-0689">Ribosomal protein</keyword>
<evidence type="ECO:0000255" key="1">
    <source>
        <dbReference type="HAMAP-Rule" id="MF_00368"/>
    </source>
</evidence>
<evidence type="ECO:0000305" key="2"/>
<comment type="function">
    <text evidence="1">Forms part of the ribosomal stalk which helps the ribosome interact with GTP-bound translation factors. Is thus essential for accurate translation.</text>
</comment>
<comment type="subunit">
    <text evidence="1">Homodimer. Part of the ribosomal stalk of the 50S ribosomal subunit. Forms a multimeric L10(L12)X complex, where L10 forms an elongated spine to which 2 to 4 L12 dimers bind in a sequential fashion. Binds GTP-bound translation factors.</text>
</comment>
<comment type="similarity">
    <text evidence="1">Belongs to the bacterial ribosomal protein bL12 family.</text>
</comment>
<gene>
    <name evidence="1" type="primary">rplL</name>
    <name type="ordered locus">BL1550</name>
</gene>
<organism>
    <name type="scientific">Bifidobacterium longum (strain NCC 2705)</name>
    <dbReference type="NCBI Taxonomy" id="206672"/>
    <lineage>
        <taxon>Bacteria</taxon>
        <taxon>Bacillati</taxon>
        <taxon>Actinomycetota</taxon>
        <taxon>Actinomycetes</taxon>
        <taxon>Bifidobacteriales</taxon>
        <taxon>Bifidobacteriaceae</taxon>
        <taxon>Bifidobacterium</taxon>
    </lineage>
</organism>
<proteinExistence type="inferred from homology"/>
<dbReference type="EMBL" id="AE014295">
    <property type="protein sequence ID" value="AAN25342.1"/>
    <property type="molecule type" value="Genomic_DNA"/>
</dbReference>
<dbReference type="RefSeq" id="NP_696706.1">
    <property type="nucleotide sequence ID" value="NC_004307.2"/>
</dbReference>
<dbReference type="RefSeq" id="WP_007053002.1">
    <property type="nucleotide sequence ID" value="NC_004307.2"/>
</dbReference>
<dbReference type="SMR" id="Q8G443"/>
<dbReference type="STRING" id="206672.BL1550"/>
<dbReference type="EnsemblBacteria" id="AAN25342">
    <property type="protein sequence ID" value="AAN25342"/>
    <property type="gene ID" value="BL1550"/>
</dbReference>
<dbReference type="GeneID" id="69578931"/>
<dbReference type="KEGG" id="blo:BL1550"/>
<dbReference type="PATRIC" id="fig|206672.9.peg.1604"/>
<dbReference type="HOGENOM" id="CLU_086499_3_0_11"/>
<dbReference type="OrthoDB" id="9811748at2"/>
<dbReference type="PhylomeDB" id="Q8G443"/>
<dbReference type="Proteomes" id="UP000000439">
    <property type="component" value="Chromosome"/>
</dbReference>
<dbReference type="GO" id="GO:0022625">
    <property type="term" value="C:cytosolic large ribosomal subunit"/>
    <property type="evidence" value="ECO:0007669"/>
    <property type="project" value="TreeGrafter"/>
</dbReference>
<dbReference type="GO" id="GO:0003729">
    <property type="term" value="F:mRNA binding"/>
    <property type="evidence" value="ECO:0007669"/>
    <property type="project" value="TreeGrafter"/>
</dbReference>
<dbReference type="GO" id="GO:0003735">
    <property type="term" value="F:structural constituent of ribosome"/>
    <property type="evidence" value="ECO:0007669"/>
    <property type="project" value="InterPro"/>
</dbReference>
<dbReference type="GO" id="GO:0006412">
    <property type="term" value="P:translation"/>
    <property type="evidence" value="ECO:0007669"/>
    <property type="project" value="UniProtKB-UniRule"/>
</dbReference>
<dbReference type="CDD" id="cd00387">
    <property type="entry name" value="Ribosomal_L7_L12"/>
    <property type="match status" value="1"/>
</dbReference>
<dbReference type="FunFam" id="3.30.1390.10:FF:000001">
    <property type="entry name" value="50S ribosomal protein L7/L12"/>
    <property type="match status" value="1"/>
</dbReference>
<dbReference type="Gene3D" id="3.30.1390.10">
    <property type="match status" value="1"/>
</dbReference>
<dbReference type="Gene3D" id="1.20.5.710">
    <property type="entry name" value="Single helix bin"/>
    <property type="match status" value="1"/>
</dbReference>
<dbReference type="HAMAP" id="MF_00368">
    <property type="entry name" value="Ribosomal_bL12"/>
    <property type="match status" value="1"/>
</dbReference>
<dbReference type="InterPro" id="IPR000206">
    <property type="entry name" value="Ribosomal_bL12"/>
</dbReference>
<dbReference type="InterPro" id="IPR013823">
    <property type="entry name" value="Ribosomal_bL12_C"/>
</dbReference>
<dbReference type="InterPro" id="IPR014719">
    <property type="entry name" value="Ribosomal_bL12_C/ClpS-like"/>
</dbReference>
<dbReference type="InterPro" id="IPR008932">
    <property type="entry name" value="Ribosomal_bL12_oligo"/>
</dbReference>
<dbReference type="InterPro" id="IPR036235">
    <property type="entry name" value="Ribosomal_bL12_oligo_N_sf"/>
</dbReference>
<dbReference type="NCBIfam" id="TIGR00855">
    <property type="entry name" value="L12"/>
    <property type="match status" value="1"/>
</dbReference>
<dbReference type="PANTHER" id="PTHR45987">
    <property type="entry name" value="39S RIBOSOMAL PROTEIN L12"/>
    <property type="match status" value="1"/>
</dbReference>
<dbReference type="PANTHER" id="PTHR45987:SF4">
    <property type="entry name" value="LARGE RIBOSOMAL SUBUNIT PROTEIN BL12M"/>
    <property type="match status" value="1"/>
</dbReference>
<dbReference type="Pfam" id="PF00542">
    <property type="entry name" value="Ribosomal_L12"/>
    <property type="match status" value="1"/>
</dbReference>
<dbReference type="Pfam" id="PF16320">
    <property type="entry name" value="Ribosomal_L12_N"/>
    <property type="match status" value="1"/>
</dbReference>
<dbReference type="SUPFAM" id="SSF54736">
    <property type="entry name" value="ClpS-like"/>
    <property type="match status" value="1"/>
</dbReference>
<dbReference type="SUPFAM" id="SSF48300">
    <property type="entry name" value="Ribosomal protein L7/12, oligomerisation (N-terminal) domain"/>
    <property type="match status" value="1"/>
</dbReference>
<protein>
    <recommendedName>
        <fullName evidence="1">Large ribosomal subunit protein bL12</fullName>
    </recommendedName>
    <alternativeName>
        <fullName evidence="2">50S ribosomal protein L7/L12</fullName>
    </alternativeName>
</protein>
<name>RL7_BIFLO</name>
<accession>Q8G443</accession>
<sequence>MAKYTNDELLEAFGEMTLVELSEFVKAFEEKFDVEAAAPVAAVAAVAGAAAPAEEEKDEFDVILSAVGDKKIQVIKAVRAITNLGLAEAKALVDGAPKAVLEKAKKEDAEKAKAQLEEAGASVELK</sequence>
<reference key="1">
    <citation type="journal article" date="2002" name="Proc. Natl. Acad. Sci. U.S.A.">
        <title>The genome sequence of Bifidobacterium longum reflects its adaptation to the human gastrointestinal tract.</title>
        <authorList>
            <person name="Schell M.A."/>
            <person name="Karmirantzou M."/>
            <person name="Snel B."/>
            <person name="Vilanova D."/>
            <person name="Berger B."/>
            <person name="Pessi G."/>
            <person name="Zwahlen M.-C."/>
            <person name="Desiere F."/>
            <person name="Bork P."/>
            <person name="Delley M."/>
            <person name="Pridmore R.D."/>
            <person name="Arigoni F."/>
        </authorList>
    </citation>
    <scope>NUCLEOTIDE SEQUENCE [LARGE SCALE GENOMIC DNA]</scope>
    <source>
        <strain>NCC 2705</strain>
    </source>
</reference>
<feature type="chain" id="PRO_0000243391" description="Large ribosomal subunit protein bL12">
    <location>
        <begin position="1"/>
        <end position="126"/>
    </location>
</feature>